<reference key="1">
    <citation type="journal article" date="1999" name="Plant J.">
        <title>UPL1 and 2, two 405 kDa ubiquitin-protein ligases from Arabidopsis thaliana related to the HECT-domain protein family.</title>
        <authorList>
            <person name="Bates P.W."/>
            <person name="Vierstra R.D."/>
        </authorList>
    </citation>
    <scope>NUCLEOTIDE SEQUENCE [GENOMIC DNA]</scope>
    <scope>PROBABLE FUNCTION</scope>
    <scope>TISSUE SPECIFICITY</scope>
    <scope>DEVELOPMENTAL STAGE</scope>
    <scope>MUTAGENESIS OF CYS-3648</scope>
    <source>
        <strain>cv. Columbia</strain>
    </source>
</reference>
<reference key="2">
    <citation type="journal article" date="2000" name="Nature">
        <title>Sequence and analysis of chromosome 1 of the plant Arabidopsis thaliana.</title>
        <authorList>
            <person name="Theologis A."/>
            <person name="Ecker J.R."/>
            <person name="Palm C.J."/>
            <person name="Federspiel N.A."/>
            <person name="Kaul S."/>
            <person name="White O."/>
            <person name="Alonso J."/>
            <person name="Altafi H."/>
            <person name="Araujo R."/>
            <person name="Bowman C.L."/>
            <person name="Brooks S.Y."/>
            <person name="Buehler E."/>
            <person name="Chan A."/>
            <person name="Chao Q."/>
            <person name="Chen H."/>
            <person name="Cheuk R.F."/>
            <person name="Chin C.W."/>
            <person name="Chung M.K."/>
            <person name="Conn L."/>
            <person name="Conway A.B."/>
            <person name="Conway A.R."/>
            <person name="Creasy T.H."/>
            <person name="Dewar K."/>
            <person name="Dunn P."/>
            <person name="Etgu P."/>
            <person name="Feldblyum T.V."/>
            <person name="Feng J.-D."/>
            <person name="Fong B."/>
            <person name="Fujii C.Y."/>
            <person name="Gill J.E."/>
            <person name="Goldsmith A.D."/>
            <person name="Haas B."/>
            <person name="Hansen N.F."/>
            <person name="Hughes B."/>
            <person name="Huizar L."/>
            <person name="Hunter J.L."/>
            <person name="Jenkins J."/>
            <person name="Johnson-Hopson C."/>
            <person name="Khan S."/>
            <person name="Khaykin E."/>
            <person name="Kim C.J."/>
            <person name="Koo H.L."/>
            <person name="Kremenetskaia I."/>
            <person name="Kurtz D.B."/>
            <person name="Kwan A."/>
            <person name="Lam B."/>
            <person name="Langin-Hooper S."/>
            <person name="Lee A."/>
            <person name="Lee J.M."/>
            <person name="Lenz C.A."/>
            <person name="Li J.H."/>
            <person name="Li Y.-P."/>
            <person name="Lin X."/>
            <person name="Liu S.X."/>
            <person name="Liu Z.A."/>
            <person name="Luros J.S."/>
            <person name="Maiti R."/>
            <person name="Marziali A."/>
            <person name="Militscher J."/>
            <person name="Miranda M."/>
            <person name="Nguyen M."/>
            <person name="Nierman W.C."/>
            <person name="Osborne B.I."/>
            <person name="Pai G."/>
            <person name="Peterson J."/>
            <person name="Pham P.K."/>
            <person name="Rizzo M."/>
            <person name="Rooney T."/>
            <person name="Rowley D."/>
            <person name="Sakano H."/>
            <person name="Salzberg S.L."/>
            <person name="Schwartz J.R."/>
            <person name="Shinn P."/>
            <person name="Southwick A.M."/>
            <person name="Sun H."/>
            <person name="Tallon L.J."/>
            <person name="Tambunga G."/>
            <person name="Toriumi M.J."/>
            <person name="Town C.D."/>
            <person name="Utterback T."/>
            <person name="Van Aken S."/>
            <person name="Vaysberg M."/>
            <person name="Vysotskaia V.S."/>
            <person name="Walker M."/>
            <person name="Wu D."/>
            <person name="Yu G."/>
            <person name="Fraser C.M."/>
            <person name="Venter J.C."/>
            <person name="Davis R.W."/>
        </authorList>
    </citation>
    <scope>NUCLEOTIDE SEQUENCE [LARGE SCALE GENOMIC DNA]</scope>
    <source>
        <strain>cv. Columbia</strain>
    </source>
</reference>
<reference key="3">
    <citation type="journal article" date="2017" name="Plant J.">
        <title>Araport11: a complete reannotation of the Arabidopsis thaliana reference genome.</title>
        <authorList>
            <person name="Cheng C.Y."/>
            <person name="Krishnakumar V."/>
            <person name="Chan A.P."/>
            <person name="Thibaud-Nissen F."/>
            <person name="Schobel S."/>
            <person name="Town C.D."/>
        </authorList>
    </citation>
    <scope>GENOME REANNOTATION</scope>
    <source>
        <strain>cv. Columbia</strain>
    </source>
</reference>
<reference key="4">
    <citation type="journal article" date="2002" name="Science">
        <title>Functional annotation of a full-length Arabidopsis cDNA collection.</title>
        <authorList>
            <person name="Seki M."/>
            <person name="Narusaka M."/>
            <person name="Kamiya A."/>
            <person name="Ishida J."/>
            <person name="Satou M."/>
            <person name="Sakurai T."/>
            <person name="Nakajima M."/>
            <person name="Enju A."/>
            <person name="Akiyama K."/>
            <person name="Oono Y."/>
            <person name="Muramatsu M."/>
            <person name="Hayashizaki Y."/>
            <person name="Kawai J."/>
            <person name="Carninci P."/>
            <person name="Itoh M."/>
            <person name="Ishii Y."/>
            <person name="Arakawa T."/>
            <person name="Shibata K."/>
            <person name="Shinagawa A."/>
            <person name="Shinozaki K."/>
        </authorList>
    </citation>
    <scope>NUCLEOTIDE SEQUENCE [LARGE SCALE MRNA] OF 3533-3681</scope>
    <source>
        <strain>cv. Columbia</strain>
    </source>
</reference>
<reference key="5">
    <citation type="journal article" date="2003" name="Plant J.">
        <title>The HECT ubiquitin-protein ligase (UPL) family in Arabidopsis: UPL3 has a specific role in trichome development.</title>
        <authorList>
            <person name="Downes B.P."/>
            <person name="Stupar R.M."/>
            <person name="Gingerich D.J."/>
            <person name="Vierstra R.D."/>
        </authorList>
    </citation>
    <scope>GENE FAMILY ORGANIZATION</scope>
</reference>
<reference key="6">
    <citation type="journal article" date="2008" name="J. Proteome Res.">
        <title>Site-specific phosphorylation profiling of Arabidopsis proteins by mass spectrometry and peptide chip analysis.</title>
        <authorList>
            <person name="de la Fuente van Bentem S."/>
            <person name="Anrather D."/>
            <person name="Dohnal I."/>
            <person name="Roitinger E."/>
            <person name="Csaszar E."/>
            <person name="Joore J."/>
            <person name="Buijnink J."/>
            <person name="Carreri A."/>
            <person name="Forzani C."/>
            <person name="Lorkovic Z.J."/>
            <person name="Barta A."/>
            <person name="Lecourieux D."/>
            <person name="Verhounig A."/>
            <person name="Jonak C."/>
            <person name="Hirt H."/>
        </authorList>
    </citation>
    <scope>PHOSPHORYLATION [LARGE SCALE ANALYSIS] AT SER-2598</scope>
    <scope>IDENTIFICATION BY MASS SPECTROMETRY [LARGE SCALE ANALYSIS]</scope>
    <source>
        <tissue>Root</tissue>
    </source>
</reference>
<reference key="7">
    <citation type="journal article" date="2009" name="J. Proteomics">
        <title>Phosphoproteomic analysis of nuclei-enriched fractions from Arabidopsis thaliana.</title>
        <authorList>
            <person name="Jones A.M.E."/>
            <person name="MacLean D."/>
            <person name="Studholme D.J."/>
            <person name="Serna-Sanz A."/>
            <person name="Andreasson E."/>
            <person name="Rathjen J.P."/>
            <person name="Peck S.C."/>
        </authorList>
    </citation>
    <scope>IDENTIFICATION BY MASS SPECTROMETRY [LARGE SCALE ANALYSIS]</scope>
    <source>
        <strain>cv. Columbia</strain>
    </source>
</reference>
<reference key="8">
    <citation type="journal article" date="2009" name="Plant Physiol.">
        <title>Large-scale Arabidopsis phosphoproteome profiling reveals novel chloroplast kinase substrates and phosphorylation networks.</title>
        <authorList>
            <person name="Reiland S."/>
            <person name="Messerli G."/>
            <person name="Baerenfaller K."/>
            <person name="Gerrits B."/>
            <person name="Endler A."/>
            <person name="Grossmann J."/>
            <person name="Gruissem W."/>
            <person name="Baginsky S."/>
        </authorList>
    </citation>
    <scope>PHOSPHORYLATION [LARGE SCALE ANALYSIS] AT SER-2598</scope>
    <scope>IDENTIFICATION BY MASS SPECTROMETRY [LARGE SCALE ANALYSIS]</scope>
</reference>
<accession>Q8GY23</accession>
<accession>F4I1Y3</accession>
<accession>Q9LG27</accession>
<accession>Q9M7K7</accession>
<protein>
    <recommendedName>
        <fullName>E3 ubiquitin-protein ligase UPL1</fullName>
        <shortName>Ubiquitin-protein ligase 1</shortName>
        <ecNumber>2.3.2.26</ecNumber>
    </recommendedName>
    <alternativeName>
        <fullName>HECT-type E3 ubiquitin transferase UPL1</fullName>
    </alternativeName>
</protein>
<keyword id="KW-0597">Phosphoprotein</keyword>
<keyword id="KW-1185">Reference proteome</keyword>
<keyword id="KW-0808">Transferase</keyword>
<keyword id="KW-0833">Ubl conjugation pathway</keyword>
<sequence>MKLRRRRASEVPSKIKSFINSVTSVPLELIHEPLACFRWEFDKGDFHHWVDLFNYFDTFFEKHVQVRKDLHIEENFEESDPPFPKDAVLQVLRVIRVVLENCTNKHFYSSYEQHLSLLLASTDADVVEACLQTLAAFLKRQIGKYSIRDASLNSKLFSLAQGWGGKEEGLGLTSCAAENSCDQVSLQLGRTLHFEFYPSDESPSELPGGLQVIHVPDVSICAESDLELLNKLVIDHNVPPSLRFALLTRMRFARAFSSLATRQQFTCIRLYAFVVLVQASGDTENVVSFFNGEPEFVNELVTLVSYEDTVPEKIRILCLLSLVALSQDRTRQPTVLTAVTSGGHRGLLSGLMQKAIDSVVCITSKWSLAFAEALLSLVTVLVSSSSGCSAMREAGLIPTLVPLIKDTDPQHLHLVSAAVHILEAFMDYSNPAAALFRDLGGLDDTIFRLKLEVSRTEDDVKEKNCSSDSNGPDTEQLPYSEALISYHRRLLLKALLRAISLGTYAPGNTNLYGSEESLLPECLCIIFRRAKDFGGGVFSLAATVMSDLIHKDPTCFNALDSAGLTSTFLDAISDEVICSAEAITCIPQCLDALCLNNSGLQAVKDRNALRCFVKIFTSPSYLRALTGDTPGSLSSGLDELLRHQSSLRTYGVDMFIEILNSMLIIGSGMEATTSKSADVPTSAAPVPMEIDVDEKSLAVSDEAEPSSDTSPANIELFLPDCVCNVARLFETVLQNAEVCSLFVEKKGIDAVLQLFSLPLMPLSTSLGQSFSVAFKNFSPQHSAGLARIVCSYLREHLKKTKILLVSIEGTQLLKLESAIQTKILRSLSCLEGMLSLSNFLLKGSASVISELSAADADVLKELGITYKQTIWQMALCNDTKEDEKKSVDRGSDNSVSASSSTAERESDEDSSNALAVRYTNPVSIRSSSSQSIWGGDREFLSIVRSGEGIHGRTRHAIARMRGGRTRRHLESFNFDSEIPADLPVTSSSHELKKKSTEVLIAEILNKLNCTLRFFFTALVKGFTSANRRRIDGASLSSASKTLGTALAKVFLEALNFDGYGAAAGHEKSLSVKCRYLGKVVDDITFLSFDTRRRVCFTAMVNSFYVHGTFKELLTTFEATSQLLWTVPFSIPASSTENEKPGERNIWSHSKWLVDTLQNYCRALDYFVNSTYLLSPTSQTQLLVQPASVGLSIGLFPVPREPETFVRNLQSQVLDVILPIWNHPMFPDCNPNFVASVTSLVTHIYSGVVDARENRSGVTRGINQRALPLQLDESIVGMIVEMGFSRSRAEIALRRVGTNSVEMAMDWLFTNPEQPVQEDDELAQALALSLGNSSETPKLEDTEKPVDVPQEEAEPKEPPVDEVIAASVKLFQSDDSMAFPLMDLFVTLCNRNKGEDRPKIVSYLIQQLKLVQLDFSKDTGALTMIPHILALVLSEDDNTREIAAQDGIVTVAIGILTDFNLKSESETEILAPKCISALLLVLSMMLQAQTKLSSEYVEGNQGGSLVPSDSPQDSTAALKDALSSDVAKGESNQALELIFGKSTGYLTMEEGHKALLIACGLIKQHVPAMIMQAVLQLCARLTKSHALAIQFLENGGLSSLFNLPKKCCFPGYDTVASVIVRHLVEDPQTLQIAMETEIRQTLSGKRHIGRVLPRTFLTTMAPVISRDPVVFMKAVASTCQLESSGGRDFVILSKEKEKPKVSGSEHGFSLNEPLGISENKLHDVSGKCSKSHRRVPANFIQVIDQLIDLVLSFPRVKRQEDGETNLISMEVDEPTTKVKGKSKVGEPEKASSSRVGEPEKAEIPEKSEELARVTFILKLLSDIVLMYSHGTSVILRRDTEISQLRGSNLPDDSPGNGGLIYHVIHRLLPISLEKFVGPEEWKEKLSEKASWFLVVLCSRSNEGRKRIINELSRVLSVFASLGRSSSKSVLLPDKRVLAFANLVYSILTKNSSSSSSNFPGCGCSPDVAKSMMDGGTIQCLTSILHVIDLDHPDAPKLVTLILKSLETLTRAANAAEQLKSEVPNEKKNRDSDERHDSHGNSTETEADELNQNNSSLQQVTDAAGNGQEQAQVSSQSAGERGSSQTQAMPQDMRIEGDETILPEPIQMDFMREEIEGDQIEMSFHVENRADDDVDDDMGDEGEDDEGDDEDADLVEDGAGVMSLAGTDVEDPEDTGLGDEYNDDMVDEDDDDFHENRVIEVRWREALDGLDHFQILGRSGGGNGFIDDITAEPFEGVNVDDLFALRRPLGFERRRQTGRSSLDRSGSEVHGFQHPLFSRPSQTGNTASVSASAGSISRHSEAGSYDVAQFYMFDTPVLPFDQVPVDPFSARLAGGGAPPPLTDYSVVGMDSSRRGVGDSRWTDIGHPQPSSLSASIAQLIEEHFISNLRASAPVNTVVERETNTTEIQEQLHPDVPPSVGSETVLGDGNEGGQQSEERELLNNNENVNNPPDVMAESFAQGQANLASPVSQDTGESLQQLEVMQPLPLNSTPNEIDRMEVGEGDGAPIDQVDHEAVHLISTAQGQPDTSSIQNVSVTAIAPPVDDPDSNFQPSVDVDMSSDGAEGNQSVQPSPLDGDNNELSSMEATENVRNDEQVEEGSLDGRAPEVNAIDPTFLEALPEDLRAEVLASQQAQSVQPPTYEPPPVDDIDPEFLAALPPDIQTEVLAQQRAQRMVQQSQGQAVDMDNASIIATLPADLREEVLLTSSEAVLAALPSPLLAEAQMLRDRAMSHYQARSSVFGSSHRLNNRRNGLGYNRLTGMDRGVGVTIGQRAVSSSADGLKVKEIEGDPLVNADALKSLIRLLRLAQPLGKGLLQRLLLNLCAHSFTRANLVQLLLDMIRPEMETSPSELAITNPQRLYGCQSNVVYGRSQLLNGLPPLVFRRVLEVLTYLATNHSAVADMLFYFDSSLLSQLSSRKGKEKVTHVTDSRDLEIPLVVFLKLLNRPQLLQSTSHLGLVMGLLQVVVYTAASRIEGWSPSSGVPEKLENKPVGEEASSETRKDAESELVGEADLSVARRKNCAEIYNIFLQLPQSDLCNLCILLGYEGLSDKIYSLAGEVLKKLAAVDVAHRKFFTKELSELASSLSSSTVRELATLSSKQKMSRSTGSMAGASILRVLQVLSSLTSPIDESNVGTERETEQEEQNIMQRLNVALEPLWHELSQCISMTELQLDHTAAASNINPGDHVLGISPTSSLSPGTQRLLPLIEAFFVLCEKIQTPSMLQQDTNVTAGEVKESSAHGSSSKTSVDSQKKTDGSVTFSKFAEKHRRLLNSFIRQNPSLLEKSLSMMLKAPRLIDFDNKKAYFRSRIRHQHDQHISGPLRISVRRAYVLEDSYNQLRMRSPQDLKGRLNVQFQGEEGIDAGGLTREWYQLLSRVIFDKGALLFTTVGNDATFQPNPNSVYQTEHLSYFKFVGRMVAKALFDGQLLDVYFTRSFYKHILGVKVTYHDIEAVDPDYYKNLKWLLENDVSDILDLTFSMDADEEKHILYEKTEVTDYELKPGGRNIRVTEETKHEYVDLVAGHILTNAIRPQINAFLEGFNELIPRELVSIFNDKELELLISGLPEIDFDDLKANTEYTSYTAGSPVIHWFWEVVKAFSKEDMARFLQFVTGTSKVPLEGFKALQGISGPQRLQIHKAYGAPERLPSAHTCFNQLDLPEYQSKEQLQERLLLAIHEASEGFGFA</sequence>
<gene>
    <name type="primary">UPL1</name>
    <name type="ordered locus">At1g55860</name>
    <name type="ORF">F14J16.14</name>
    <name type="ORF">F14J16.37</name>
</gene>
<proteinExistence type="evidence at protein level"/>
<comment type="function">
    <text evidence="6">Probable E3 ubiquitin-protein ligase which mediates ubiquitination and subsequent proteasomal degradation of target proteins.</text>
</comment>
<comment type="catalytic activity">
    <reaction>
        <text>S-ubiquitinyl-[E2 ubiquitin-conjugating enzyme]-L-cysteine + [acceptor protein]-L-lysine = [E2 ubiquitin-conjugating enzyme]-L-cysteine + N(6)-ubiquitinyl-[acceptor protein]-L-lysine.</text>
        <dbReference type="EC" id="2.3.2.26"/>
    </reaction>
</comment>
<comment type="pathway">
    <text>Protein modification; protein ubiquitination.</text>
</comment>
<comment type="tissue specificity">
    <text evidence="5">Widely expressed. Expressed in root, stem, cauline and rosette leaf, seedling and flower (at protein level).</text>
</comment>
<comment type="developmental stage">
    <text evidence="5">Constitutively expressed throughout development post-germination (at protein level).</text>
</comment>
<comment type="similarity">
    <text evidence="7">Belongs to the UPL family. TOM1/PTR1 subfamily.</text>
</comment>
<comment type="sequence caution" evidence="7">
    <conflict type="erroneous gene model prediction">
        <sequence resource="EMBL-CDS" id="AAF79338"/>
    </conflict>
</comment>
<comment type="sequence caution" evidence="7">
    <conflict type="erroneous initiation">
        <sequence resource="EMBL-CDS" id="BAC42550"/>
    </conflict>
</comment>
<organism>
    <name type="scientific">Arabidopsis thaliana</name>
    <name type="common">Mouse-ear cress</name>
    <dbReference type="NCBI Taxonomy" id="3702"/>
    <lineage>
        <taxon>Eukaryota</taxon>
        <taxon>Viridiplantae</taxon>
        <taxon>Streptophyta</taxon>
        <taxon>Embryophyta</taxon>
        <taxon>Tracheophyta</taxon>
        <taxon>Spermatophyta</taxon>
        <taxon>Magnoliopsida</taxon>
        <taxon>eudicotyledons</taxon>
        <taxon>Gunneridae</taxon>
        <taxon>Pentapetalae</taxon>
        <taxon>rosids</taxon>
        <taxon>malvids</taxon>
        <taxon>Brassicales</taxon>
        <taxon>Brassicaceae</taxon>
        <taxon>Camelineae</taxon>
        <taxon>Arabidopsis</taxon>
    </lineage>
</organism>
<name>UPL1_ARATH</name>
<feature type="chain" id="PRO_0000120343" description="E3 ubiquitin-protein ligase UPL1">
    <location>
        <begin position="1"/>
        <end position="3681"/>
    </location>
</feature>
<feature type="domain" description="UBA" evidence="2">
    <location>
        <begin position="1269"/>
        <end position="1310"/>
    </location>
</feature>
<feature type="domain" description="UIM" evidence="3">
    <location>
        <begin position="1316"/>
        <end position="1335"/>
    </location>
</feature>
<feature type="domain" description="HECT" evidence="1">
    <location>
        <begin position="3340"/>
        <end position="3681"/>
    </location>
</feature>
<feature type="region of interest" description="Disordered" evidence="4">
    <location>
        <begin position="882"/>
        <end position="912"/>
    </location>
</feature>
<feature type="region of interest" description="Disordered" evidence="4">
    <location>
        <begin position="1332"/>
        <end position="1358"/>
    </location>
</feature>
<feature type="region of interest" description="Disordered" evidence="4">
    <location>
        <begin position="1768"/>
        <end position="1802"/>
    </location>
</feature>
<feature type="region of interest" description="Disordered" evidence="4">
    <location>
        <begin position="2015"/>
        <end position="2094"/>
    </location>
</feature>
<feature type="region of interest" description="Disordered" evidence="4">
    <location>
        <begin position="2125"/>
        <end position="2151"/>
    </location>
</feature>
<feature type="region of interest" description="Disordered" evidence="4">
    <location>
        <begin position="2253"/>
        <end position="2287"/>
    </location>
</feature>
<feature type="region of interest" description="Disordered" evidence="4">
    <location>
        <begin position="2401"/>
        <end position="2435"/>
    </location>
</feature>
<feature type="region of interest" description="Disordered" evidence="4">
    <location>
        <begin position="2483"/>
        <end position="2505"/>
    </location>
</feature>
<feature type="region of interest" description="Disordered" evidence="4">
    <location>
        <begin position="2537"/>
        <end position="2606"/>
    </location>
</feature>
<feature type="region of interest" description="Disordered" evidence="4">
    <location>
        <begin position="2975"/>
        <end position="3003"/>
    </location>
</feature>
<feature type="region of interest" description="Disordered" evidence="4">
    <location>
        <begin position="3228"/>
        <end position="3254"/>
    </location>
</feature>
<feature type="compositionally biased region" description="Basic and acidic residues" evidence="4">
    <location>
        <begin position="882"/>
        <end position="891"/>
    </location>
</feature>
<feature type="compositionally biased region" description="Low complexity" evidence="4">
    <location>
        <begin position="892"/>
        <end position="901"/>
    </location>
</feature>
<feature type="compositionally biased region" description="Basic and acidic residues" evidence="4">
    <location>
        <begin position="1336"/>
        <end position="1345"/>
    </location>
</feature>
<feature type="compositionally biased region" description="Basic and acidic residues" evidence="4">
    <location>
        <begin position="1782"/>
        <end position="1802"/>
    </location>
</feature>
<feature type="compositionally biased region" description="Basic and acidic residues" evidence="4">
    <location>
        <begin position="2017"/>
        <end position="2037"/>
    </location>
</feature>
<feature type="compositionally biased region" description="Polar residues" evidence="4">
    <location>
        <begin position="2038"/>
        <end position="2087"/>
    </location>
</feature>
<feature type="compositionally biased region" description="Acidic residues" evidence="4">
    <location>
        <begin position="2130"/>
        <end position="2151"/>
    </location>
</feature>
<feature type="compositionally biased region" description="Basic and acidic residues" evidence="4">
    <location>
        <begin position="2253"/>
        <end position="2265"/>
    </location>
</feature>
<feature type="compositionally biased region" description="Polar residues" evidence="4">
    <location>
        <begin position="2277"/>
        <end position="2287"/>
    </location>
</feature>
<feature type="compositionally biased region" description="Basic and acidic residues" evidence="4">
    <location>
        <begin position="2982"/>
        <end position="3002"/>
    </location>
</feature>
<feature type="compositionally biased region" description="Polar residues" evidence="4">
    <location>
        <begin position="3237"/>
        <end position="3247"/>
    </location>
</feature>
<feature type="active site" description="Glycyl thioester intermediate" evidence="1">
    <location>
        <position position="3648"/>
    </location>
</feature>
<feature type="modified residue" description="Phosphoserine" evidence="8 9">
    <location>
        <position position="2598"/>
    </location>
</feature>
<feature type="mutagenesis site" description="Abolishes ability to conjugate ubiquitin in vitro." evidence="5">
    <original>C</original>
    <variation>S</variation>
    <variation>A</variation>
    <location>
        <position position="3648"/>
    </location>
</feature>
<feature type="sequence conflict" description="In Ref. 1; AAF36454." evidence="7" ref="1">
    <original>T</original>
    <variation>S</variation>
    <location>
        <position position="865"/>
    </location>
</feature>
<feature type="sequence conflict" description="In Ref. 1; AAF36454." evidence="7" ref="1">
    <original>A</original>
    <variation>T</variation>
    <location>
        <position position="1186"/>
    </location>
</feature>
<feature type="sequence conflict" description="In Ref. 1; AAF36454." evidence="7" ref="1">
    <original>N</original>
    <variation>K</variation>
    <location>
        <position position="1207"/>
    </location>
</feature>
<feature type="sequence conflict" description="In Ref. 1; AAF36454." evidence="7" ref="1">
    <original>L</original>
    <variation>S</variation>
    <location>
        <position position="3027"/>
    </location>
</feature>
<evidence type="ECO:0000255" key="1">
    <source>
        <dbReference type="PROSITE-ProRule" id="PRU00104"/>
    </source>
</evidence>
<evidence type="ECO:0000255" key="2">
    <source>
        <dbReference type="PROSITE-ProRule" id="PRU00212"/>
    </source>
</evidence>
<evidence type="ECO:0000255" key="3">
    <source>
        <dbReference type="PROSITE-ProRule" id="PRU00213"/>
    </source>
</evidence>
<evidence type="ECO:0000256" key="4">
    <source>
        <dbReference type="SAM" id="MobiDB-lite"/>
    </source>
</evidence>
<evidence type="ECO:0000269" key="5">
    <source>
    </source>
</evidence>
<evidence type="ECO:0000303" key="6">
    <source>
    </source>
</evidence>
<evidence type="ECO:0000305" key="7"/>
<evidence type="ECO:0007744" key="8">
    <source>
    </source>
</evidence>
<evidence type="ECO:0007744" key="9">
    <source>
    </source>
</evidence>
<dbReference type="EC" id="2.3.2.26"/>
<dbReference type="EMBL" id="AF127564">
    <property type="protein sequence ID" value="AAF36454.1"/>
    <property type="molecule type" value="Genomic_DNA"/>
</dbReference>
<dbReference type="EMBL" id="AC002304">
    <property type="protein sequence ID" value="AAF79338.1"/>
    <property type="status" value="ALT_SEQ"/>
    <property type="molecule type" value="Genomic_DNA"/>
</dbReference>
<dbReference type="EMBL" id="CP002684">
    <property type="protein sequence ID" value="AEE33309.2"/>
    <property type="molecule type" value="Genomic_DNA"/>
</dbReference>
<dbReference type="EMBL" id="AK117912">
    <property type="protein sequence ID" value="BAC42550.1"/>
    <property type="status" value="ALT_INIT"/>
    <property type="molecule type" value="mRNA"/>
</dbReference>
<dbReference type="PIR" id="H96599">
    <property type="entry name" value="H96599"/>
</dbReference>
<dbReference type="RefSeq" id="NP_001185245.1">
    <property type="nucleotide sequence ID" value="NM_001198316.2"/>
</dbReference>
<dbReference type="SMR" id="Q8GY23"/>
<dbReference type="BioGRID" id="27261">
    <property type="interactions" value="1"/>
</dbReference>
<dbReference type="FunCoup" id="Q8GY23">
    <property type="interactions" value="4065"/>
</dbReference>
<dbReference type="STRING" id="3702.Q8GY23"/>
<dbReference type="GlyGen" id="Q8GY23">
    <property type="glycosylation" value="1 site"/>
</dbReference>
<dbReference type="iPTMnet" id="Q8GY23"/>
<dbReference type="PaxDb" id="3702-AT1G55860.1"/>
<dbReference type="ProteomicsDB" id="234116"/>
<dbReference type="EnsemblPlants" id="AT1G55860.1">
    <property type="protein sequence ID" value="AT1G55860.1"/>
    <property type="gene ID" value="AT1G55860"/>
</dbReference>
<dbReference type="GeneID" id="842036"/>
<dbReference type="Gramene" id="AT1G55860.1">
    <property type="protein sequence ID" value="AT1G55860.1"/>
    <property type="gene ID" value="AT1G55860"/>
</dbReference>
<dbReference type="KEGG" id="ath:AT1G55860"/>
<dbReference type="Araport" id="AT1G55860"/>
<dbReference type="TAIR" id="AT1G55860">
    <property type="gene designation" value="UPL1"/>
</dbReference>
<dbReference type="eggNOG" id="KOG0939">
    <property type="taxonomic scope" value="Eukaryota"/>
</dbReference>
<dbReference type="HOGENOM" id="CLU_000215_1_0_1"/>
<dbReference type="InParanoid" id="Q8GY23"/>
<dbReference type="OMA" id="ADEMKYG"/>
<dbReference type="PhylomeDB" id="Q8GY23"/>
<dbReference type="UniPathway" id="UPA00143"/>
<dbReference type="PRO" id="PR:Q8GY23"/>
<dbReference type="Proteomes" id="UP000006548">
    <property type="component" value="Chromosome 1"/>
</dbReference>
<dbReference type="ExpressionAtlas" id="Q8GY23">
    <property type="expression patterns" value="baseline and differential"/>
</dbReference>
<dbReference type="GO" id="GO:0005829">
    <property type="term" value="C:cytosol"/>
    <property type="evidence" value="ECO:0007005"/>
    <property type="project" value="TAIR"/>
</dbReference>
<dbReference type="GO" id="GO:0005739">
    <property type="term" value="C:mitochondrion"/>
    <property type="evidence" value="ECO:0007005"/>
    <property type="project" value="TAIR"/>
</dbReference>
<dbReference type="GO" id="GO:0005634">
    <property type="term" value="C:nucleus"/>
    <property type="evidence" value="ECO:0007005"/>
    <property type="project" value="TAIR"/>
</dbReference>
<dbReference type="GO" id="GO:0009506">
    <property type="term" value="C:plasmodesma"/>
    <property type="evidence" value="ECO:0007005"/>
    <property type="project" value="TAIR"/>
</dbReference>
<dbReference type="GO" id="GO:0000151">
    <property type="term" value="C:ubiquitin ligase complex"/>
    <property type="evidence" value="ECO:0000250"/>
    <property type="project" value="TAIR"/>
</dbReference>
<dbReference type="GO" id="GO:0004842">
    <property type="term" value="F:ubiquitin-protein transferase activity"/>
    <property type="evidence" value="ECO:0000314"/>
    <property type="project" value="TAIR"/>
</dbReference>
<dbReference type="GO" id="GO:0016567">
    <property type="term" value="P:protein ubiquitination"/>
    <property type="evidence" value="ECO:0000250"/>
    <property type="project" value="TAIR"/>
</dbReference>
<dbReference type="CDD" id="cd00078">
    <property type="entry name" value="HECTc"/>
    <property type="match status" value="1"/>
</dbReference>
<dbReference type="CDD" id="cd14327">
    <property type="entry name" value="UBA_atUPL1_2_like"/>
    <property type="match status" value="1"/>
</dbReference>
<dbReference type="FunFam" id="3.90.1750.10:FF:000026">
    <property type="entry name" value="E3 ubiquitin-protein ligase HACE1"/>
    <property type="match status" value="1"/>
</dbReference>
<dbReference type="FunFam" id="3.30.2160.10:FF:000001">
    <property type="entry name" value="E3 ubiquitin-protein ligase NEDD4-like"/>
    <property type="match status" value="1"/>
</dbReference>
<dbReference type="FunFam" id="1.25.10.10:FF:001075">
    <property type="entry name" value="E3 ubiquitin-protein ligase UPL1"/>
    <property type="match status" value="1"/>
</dbReference>
<dbReference type="FunFam" id="3.30.2410.10:FF:000010">
    <property type="entry name" value="E3 ubiquitin-protein ligase UPL1"/>
    <property type="match status" value="1"/>
</dbReference>
<dbReference type="FunFam" id="3.90.1750.10:FF:000003">
    <property type="entry name" value="E3 ubiquitin-protein ligase UPL1"/>
    <property type="match status" value="1"/>
</dbReference>
<dbReference type="Gene3D" id="6.10.250.1630">
    <property type="match status" value="1"/>
</dbReference>
<dbReference type="Gene3D" id="1.10.8.10">
    <property type="entry name" value="DNA helicase RuvA subunit, C-terminal domain"/>
    <property type="match status" value="1"/>
</dbReference>
<dbReference type="Gene3D" id="3.30.2160.10">
    <property type="entry name" value="Hect, E3 ligase catalytic domain"/>
    <property type="match status" value="1"/>
</dbReference>
<dbReference type="Gene3D" id="3.30.2410.10">
    <property type="entry name" value="Hect, E3 ligase catalytic domain"/>
    <property type="match status" value="1"/>
</dbReference>
<dbReference type="Gene3D" id="3.90.1750.10">
    <property type="entry name" value="Hect, E3 ligase catalytic domains"/>
    <property type="match status" value="1"/>
</dbReference>
<dbReference type="Gene3D" id="1.25.10.10">
    <property type="entry name" value="Leucine-rich Repeat Variant"/>
    <property type="match status" value="1"/>
</dbReference>
<dbReference type="InterPro" id="IPR011989">
    <property type="entry name" value="ARM-like"/>
</dbReference>
<dbReference type="InterPro" id="IPR016024">
    <property type="entry name" value="ARM-type_fold"/>
</dbReference>
<dbReference type="InterPro" id="IPR010309">
    <property type="entry name" value="E3_Ub_ligase_DUF908"/>
</dbReference>
<dbReference type="InterPro" id="IPR010314">
    <property type="entry name" value="E3_Ub_ligase_DUF913"/>
</dbReference>
<dbReference type="InterPro" id="IPR050409">
    <property type="entry name" value="E3_ubiq-protein_ligase"/>
</dbReference>
<dbReference type="InterPro" id="IPR000569">
    <property type="entry name" value="HECT_dom"/>
</dbReference>
<dbReference type="InterPro" id="IPR035983">
    <property type="entry name" value="Hect_E3_ubiquitin_ligase"/>
</dbReference>
<dbReference type="InterPro" id="IPR025527">
    <property type="entry name" value="HUWE1/Rev1_UBM"/>
</dbReference>
<dbReference type="InterPro" id="IPR015940">
    <property type="entry name" value="UBA"/>
</dbReference>
<dbReference type="InterPro" id="IPR009060">
    <property type="entry name" value="UBA-like_sf"/>
</dbReference>
<dbReference type="InterPro" id="IPR003903">
    <property type="entry name" value="UIM_dom"/>
</dbReference>
<dbReference type="PANTHER" id="PTHR11254:SF67">
    <property type="entry name" value="E3 UBIQUITIN-PROTEIN LIGASE HUWE1"/>
    <property type="match status" value="1"/>
</dbReference>
<dbReference type="PANTHER" id="PTHR11254">
    <property type="entry name" value="HECT DOMAIN UBIQUITIN-PROTEIN LIGASE"/>
    <property type="match status" value="1"/>
</dbReference>
<dbReference type="Pfam" id="PF06012">
    <property type="entry name" value="DUF908"/>
    <property type="match status" value="2"/>
</dbReference>
<dbReference type="Pfam" id="PF06025">
    <property type="entry name" value="DUF913"/>
    <property type="match status" value="1"/>
</dbReference>
<dbReference type="Pfam" id="PF00632">
    <property type="entry name" value="HECT"/>
    <property type="match status" value="1"/>
</dbReference>
<dbReference type="Pfam" id="PF22562">
    <property type="entry name" value="UBA_7"/>
    <property type="match status" value="1"/>
</dbReference>
<dbReference type="Pfam" id="PF14377">
    <property type="entry name" value="UBM"/>
    <property type="match status" value="3"/>
</dbReference>
<dbReference type="SMART" id="SM00119">
    <property type="entry name" value="HECTc"/>
    <property type="match status" value="1"/>
</dbReference>
<dbReference type="SMART" id="SM00165">
    <property type="entry name" value="UBA"/>
    <property type="match status" value="1"/>
</dbReference>
<dbReference type="SUPFAM" id="SSF48371">
    <property type="entry name" value="ARM repeat"/>
    <property type="match status" value="2"/>
</dbReference>
<dbReference type="SUPFAM" id="SSF56204">
    <property type="entry name" value="Hect, E3 ligase catalytic domain"/>
    <property type="match status" value="1"/>
</dbReference>
<dbReference type="SUPFAM" id="SSF46934">
    <property type="entry name" value="UBA-like"/>
    <property type="match status" value="1"/>
</dbReference>
<dbReference type="PROSITE" id="PS50237">
    <property type="entry name" value="HECT"/>
    <property type="match status" value="1"/>
</dbReference>
<dbReference type="PROSITE" id="PS50030">
    <property type="entry name" value="UBA"/>
    <property type="match status" value="1"/>
</dbReference>
<dbReference type="PROSITE" id="PS50330">
    <property type="entry name" value="UIM"/>
    <property type="match status" value="1"/>
</dbReference>